<evidence type="ECO:0000255" key="1">
    <source>
        <dbReference type="HAMAP-Rule" id="MF_00310"/>
    </source>
</evidence>
<organism>
    <name type="scientific">Methanococcus maripaludis (strain DSM 14266 / JCM 13030 / NBRC 101832 / S2 / LL)</name>
    <dbReference type="NCBI Taxonomy" id="267377"/>
    <lineage>
        <taxon>Archaea</taxon>
        <taxon>Methanobacteriati</taxon>
        <taxon>Methanobacteriota</taxon>
        <taxon>Methanomada group</taxon>
        <taxon>Methanococci</taxon>
        <taxon>Methanococcales</taxon>
        <taxon>Methanococcaceae</taxon>
        <taxon>Methanococcus</taxon>
    </lineage>
</organism>
<comment type="function">
    <text evidence="1">Component of the A-type ATP synthase that produces ATP from ADP in the presence of a proton gradient across the membrane. The B chain is a regulatory subunit.</text>
</comment>
<comment type="subunit">
    <text evidence="1">Has multiple subunits with at least A(3), B(3), C, D, E, F, H, I and proteolipid K(x).</text>
</comment>
<comment type="subcellular location">
    <subcellularLocation>
        <location evidence="1">Cell membrane</location>
        <topology evidence="1">Peripheral membrane protein</topology>
    </subcellularLocation>
</comment>
<comment type="similarity">
    <text evidence="1">Belongs to the ATPase alpha/beta chains family.</text>
</comment>
<feature type="chain" id="PRO_1000059381" description="A-type ATP synthase subunit B">
    <location>
        <begin position="1"/>
        <end position="462"/>
    </location>
</feature>
<accession>Q6LYE6</accession>
<gene>
    <name evidence="1" type="primary">atpB</name>
    <name type="ordered locus">MMP1045</name>
</gene>
<protein>
    <recommendedName>
        <fullName evidence="1">A-type ATP synthase subunit B</fullName>
    </recommendedName>
</protein>
<reference key="1">
    <citation type="journal article" date="2004" name="J. Bacteriol.">
        <title>Complete genome sequence of the genetically tractable hydrogenotrophic methanogen Methanococcus maripaludis.</title>
        <authorList>
            <person name="Hendrickson E.L."/>
            <person name="Kaul R."/>
            <person name="Zhou Y."/>
            <person name="Bovee D."/>
            <person name="Chapman P."/>
            <person name="Chung J."/>
            <person name="Conway de Macario E."/>
            <person name="Dodsworth J.A."/>
            <person name="Gillett W."/>
            <person name="Graham D.E."/>
            <person name="Hackett M."/>
            <person name="Haydock A.K."/>
            <person name="Kang A."/>
            <person name="Land M.L."/>
            <person name="Levy R."/>
            <person name="Lie T.J."/>
            <person name="Major T.A."/>
            <person name="Moore B.C."/>
            <person name="Porat I."/>
            <person name="Palmeiri A."/>
            <person name="Rouse G."/>
            <person name="Saenphimmachak C."/>
            <person name="Soell D."/>
            <person name="Van Dien S."/>
            <person name="Wang T."/>
            <person name="Whitman W.B."/>
            <person name="Xia Q."/>
            <person name="Zhang Y."/>
            <person name="Larimer F.W."/>
            <person name="Olson M.V."/>
            <person name="Leigh J.A."/>
        </authorList>
    </citation>
    <scope>NUCLEOTIDE SEQUENCE [LARGE SCALE GENOMIC DNA]</scope>
    <source>
        <strain>DSM 14266 / JCM 13030 / NBRC 101832 / S2 / LL</strain>
    </source>
</reference>
<proteinExistence type="inferred from homology"/>
<keyword id="KW-0066">ATP synthesis</keyword>
<keyword id="KW-1003">Cell membrane</keyword>
<keyword id="KW-0375">Hydrogen ion transport</keyword>
<keyword id="KW-0406">Ion transport</keyword>
<keyword id="KW-0472">Membrane</keyword>
<keyword id="KW-1185">Reference proteome</keyword>
<keyword id="KW-0813">Transport</keyword>
<sequence>MDAMQKTIEYTSVSRIAGPLMVIDGIEGIAYGEIVDITTPNGDKRTGQVLEAREEIAVVQVFEGTSELNTSETKVRFTGDTAKIGVSYDMLGRIFNGAGKPLDGGPEIIAEEKLDINGYPLNPVSRNPPNAFVQTGVSTIDGTNTLVRGQKIPIFSGSGLPHNKLATQIARQAKVRGEGEQFAVVFAAMGITGEESNYFMDEFKKTGALEKAVVFINLADDPAIERILTPRIALTTAEYLAYEKGMHVLVILTDLTNYCEALREIAAARNEVPGRRGYPGYMYTDLACLYERAGRVKGKEGTVTQIPILTMPDDDITHPIPDLTGYITEGQIVLSRELNRKGVYPPVDILPSLSRLAGNGQGEGKTRDDHSKVISQAYAAYAEGRGLRDLVAVVGEEALTERDRSFLKFADAFENSIVTQGVDEDRSIEETLDYVWDLLTILPREELKRVSDELIEKYLPKK</sequence>
<dbReference type="EMBL" id="BX950229">
    <property type="protein sequence ID" value="CAF30601.1"/>
    <property type="molecule type" value="Genomic_DNA"/>
</dbReference>
<dbReference type="RefSeq" id="WP_011170989.1">
    <property type="nucleotide sequence ID" value="NC_005791.1"/>
</dbReference>
<dbReference type="SMR" id="Q6LYE6"/>
<dbReference type="STRING" id="267377.MMP1045"/>
<dbReference type="EnsemblBacteria" id="CAF30601">
    <property type="protein sequence ID" value="CAF30601"/>
    <property type="gene ID" value="MMP1045"/>
</dbReference>
<dbReference type="GeneID" id="10982624"/>
<dbReference type="GeneID" id="2761712"/>
<dbReference type="KEGG" id="mmp:MMP1045"/>
<dbReference type="PATRIC" id="fig|267377.15.peg.1077"/>
<dbReference type="eggNOG" id="arCOG00865">
    <property type="taxonomic scope" value="Archaea"/>
</dbReference>
<dbReference type="HOGENOM" id="CLU_022916_0_0_2"/>
<dbReference type="OrthoDB" id="32941at2157"/>
<dbReference type="Proteomes" id="UP000000590">
    <property type="component" value="Chromosome"/>
</dbReference>
<dbReference type="GO" id="GO:0005886">
    <property type="term" value="C:plasma membrane"/>
    <property type="evidence" value="ECO:0007669"/>
    <property type="project" value="UniProtKB-SubCell"/>
</dbReference>
<dbReference type="GO" id="GO:0005524">
    <property type="term" value="F:ATP binding"/>
    <property type="evidence" value="ECO:0007669"/>
    <property type="project" value="UniProtKB-UniRule"/>
</dbReference>
<dbReference type="GO" id="GO:0046933">
    <property type="term" value="F:proton-transporting ATP synthase activity, rotational mechanism"/>
    <property type="evidence" value="ECO:0007669"/>
    <property type="project" value="UniProtKB-UniRule"/>
</dbReference>
<dbReference type="GO" id="GO:0042777">
    <property type="term" value="P:proton motive force-driven plasma membrane ATP synthesis"/>
    <property type="evidence" value="ECO:0007669"/>
    <property type="project" value="UniProtKB-UniRule"/>
</dbReference>
<dbReference type="CDD" id="cd18112">
    <property type="entry name" value="ATP-synt_V_A-type_beta_C"/>
    <property type="match status" value="1"/>
</dbReference>
<dbReference type="CDD" id="cd18118">
    <property type="entry name" value="ATP-synt_V_A-type_beta_N"/>
    <property type="match status" value="1"/>
</dbReference>
<dbReference type="CDD" id="cd01135">
    <property type="entry name" value="V_A-ATPase_B"/>
    <property type="match status" value="1"/>
</dbReference>
<dbReference type="Gene3D" id="3.40.50.12240">
    <property type="match status" value="1"/>
</dbReference>
<dbReference type="HAMAP" id="MF_00310">
    <property type="entry name" value="ATP_synth_B_arch"/>
    <property type="match status" value="1"/>
</dbReference>
<dbReference type="InterPro" id="IPR055190">
    <property type="entry name" value="ATP-synt_VA_C"/>
</dbReference>
<dbReference type="InterPro" id="IPR020003">
    <property type="entry name" value="ATPase_a/bsu_AS"/>
</dbReference>
<dbReference type="InterPro" id="IPR004100">
    <property type="entry name" value="ATPase_F1/V1/A1_a/bsu_N"/>
</dbReference>
<dbReference type="InterPro" id="IPR000194">
    <property type="entry name" value="ATPase_F1/V1/A1_a/bsu_nucl-bd"/>
</dbReference>
<dbReference type="InterPro" id="IPR027417">
    <property type="entry name" value="P-loop_NTPase"/>
</dbReference>
<dbReference type="InterPro" id="IPR022879">
    <property type="entry name" value="V-ATPase_su_B/beta"/>
</dbReference>
<dbReference type="NCBIfam" id="NF003235">
    <property type="entry name" value="PRK04196.1"/>
    <property type="match status" value="1"/>
</dbReference>
<dbReference type="PANTHER" id="PTHR43389">
    <property type="entry name" value="V-TYPE PROTON ATPASE SUBUNIT B"/>
    <property type="match status" value="1"/>
</dbReference>
<dbReference type="PANTHER" id="PTHR43389:SF4">
    <property type="entry name" value="V-TYPE PROTON ATPASE SUBUNIT B"/>
    <property type="match status" value="1"/>
</dbReference>
<dbReference type="Pfam" id="PF00006">
    <property type="entry name" value="ATP-synt_ab"/>
    <property type="match status" value="1"/>
</dbReference>
<dbReference type="Pfam" id="PF02874">
    <property type="entry name" value="ATP-synt_ab_N"/>
    <property type="match status" value="1"/>
</dbReference>
<dbReference type="Pfam" id="PF22919">
    <property type="entry name" value="ATP-synt_VA_C"/>
    <property type="match status" value="1"/>
</dbReference>
<dbReference type="PIRSF" id="PIRSF039114">
    <property type="entry name" value="V-ATPsynth_beta/V-ATPase_B"/>
    <property type="match status" value="1"/>
</dbReference>
<dbReference type="SUPFAM" id="SSF47917">
    <property type="entry name" value="C-terminal domain of alpha and beta subunits of F1 ATP synthase"/>
    <property type="match status" value="1"/>
</dbReference>
<dbReference type="SUPFAM" id="SSF52540">
    <property type="entry name" value="P-loop containing nucleoside triphosphate hydrolases"/>
    <property type="match status" value="1"/>
</dbReference>
<dbReference type="PROSITE" id="PS00152">
    <property type="entry name" value="ATPASE_ALPHA_BETA"/>
    <property type="match status" value="1"/>
</dbReference>
<name>AATB_METMP</name>